<feature type="chain" id="PRO_1000116024" description="Ferrochelatase">
    <location>
        <begin position="1"/>
        <end position="338"/>
    </location>
</feature>
<feature type="binding site" evidence="1">
    <location>
        <position position="202"/>
    </location>
    <ligand>
        <name>Fe cation</name>
        <dbReference type="ChEBI" id="CHEBI:24875"/>
    </ligand>
</feature>
<feature type="binding site" evidence="1">
    <location>
        <position position="283"/>
    </location>
    <ligand>
        <name>Fe cation</name>
        <dbReference type="ChEBI" id="CHEBI:24875"/>
    </ligand>
</feature>
<evidence type="ECO:0000255" key="1">
    <source>
        <dbReference type="HAMAP-Rule" id="MF_00323"/>
    </source>
</evidence>
<organism>
    <name type="scientific">Acinetobacter baumannii (strain ATCC 17978 / DSM 105126 / CIP 53.77 / LMG 1025 / NCDC KC755 / 5377)</name>
    <dbReference type="NCBI Taxonomy" id="400667"/>
    <lineage>
        <taxon>Bacteria</taxon>
        <taxon>Pseudomonadati</taxon>
        <taxon>Pseudomonadota</taxon>
        <taxon>Gammaproteobacteria</taxon>
        <taxon>Moraxellales</taxon>
        <taxon>Moraxellaceae</taxon>
        <taxon>Acinetobacter</taxon>
        <taxon>Acinetobacter calcoaceticus/baumannii complex</taxon>
    </lineage>
</organism>
<sequence length="338" mass="38269">MSFEQKPKVTVILANLGTPDEATVPAVRRFLKQFLSDPRVIEIPKFIWWIILNLFVLPFRPKRVAHAYASVWSTDSPMREIVFEQTQRVQAYLERENKQFDLTVLPAMTYGNPGIDAVLEKLSAHPQEHVILLPLFPQYSATSTAPLYDAFAKWIPTQRNLPGLTIIKDYYQHPMFIQALAESVLAYQEQHGKPEKLLMSFHGIPQPYADKGDPYADRCRITAKLVAEALHLKDVEWAISFQSRFGKQEWVKPYTDQLLQDWAKQGVKSVQVLSPAFSADCLETLEELAIQNAELFQQAGGGSYAYIPALNSDQAHIDLLAGLVQANLDALTHTLAHR</sequence>
<reference key="1">
    <citation type="journal article" date="2007" name="Genes Dev.">
        <title>New insights into Acinetobacter baumannii pathogenesis revealed by high-density pyrosequencing and transposon mutagenesis.</title>
        <authorList>
            <person name="Smith M.G."/>
            <person name="Gianoulis T.A."/>
            <person name="Pukatzki S."/>
            <person name="Mekalanos J.J."/>
            <person name="Ornston L.N."/>
            <person name="Gerstein M."/>
            <person name="Snyder M."/>
        </authorList>
    </citation>
    <scope>NUCLEOTIDE SEQUENCE [LARGE SCALE GENOMIC DNA]</scope>
    <source>
        <strain>ATCC 17978 / DSM 105126 / CIP 53.77 / LMG 1025 / NCDC KC755 / 5377</strain>
    </source>
</reference>
<protein>
    <recommendedName>
        <fullName evidence="1">Ferrochelatase</fullName>
        <ecNumber evidence="1">4.98.1.1</ecNumber>
    </recommendedName>
    <alternativeName>
        <fullName evidence="1">Heme synthase</fullName>
    </alternativeName>
    <alternativeName>
        <fullName evidence="1">Protoheme ferro-lyase</fullName>
    </alternativeName>
</protein>
<gene>
    <name evidence="1" type="primary">hemH</name>
    <name type="ordered locus">A1S_0382</name>
</gene>
<accession>A3M1P7</accession>
<name>HEMH_ACIBT</name>
<dbReference type="EC" id="4.98.1.1" evidence="1"/>
<dbReference type="EMBL" id="CP000521">
    <property type="protein sequence ID" value="ABO10841.2"/>
    <property type="molecule type" value="Genomic_DNA"/>
</dbReference>
<dbReference type="RefSeq" id="WP_000007337.1">
    <property type="nucleotide sequence ID" value="NZ_CP053098.1"/>
</dbReference>
<dbReference type="SMR" id="A3M1P7"/>
<dbReference type="KEGG" id="acb:A1S_0382"/>
<dbReference type="HOGENOM" id="CLU_018884_0_0_6"/>
<dbReference type="UniPathway" id="UPA00252">
    <property type="reaction ID" value="UER00325"/>
</dbReference>
<dbReference type="GO" id="GO:0005737">
    <property type="term" value="C:cytoplasm"/>
    <property type="evidence" value="ECO:0007669"/>
    <property type="project" value="UniProtKB-SubCell"/>
</dbReference>
<dbReference type="GO" id="GO:0004325">
    <property type="term" value="F:ferrochelatase activity"/>
    <property type="evidence" value="ECO:0007669"/>
    <property type="project" value="UniProtKB-UniRule"/>
</dbReference>
<dbReference type="GO" id="GO:0046872">
    <property type="term" value="F:metal ion binding"/>
    <property type="evidence" value="ECO:0007669"/>
    <property type="project" value="UniProtKB-KW"/>
</dbReference>
<dbReference type="GO" id="GO:0006783">
    <property type="term" value="P:heme biosynthetic process"/>
    <property type="evidence" value="ECO:0007669"/>
    <property type="project" value="UniProtKB-UniRule"/>
</dbReference>
<dbReference type="CDD" id="cd00419">
    <property type="entry name" value="Ferrochelatase_C"/>
    <property type="match status" value="1"/>
</dbReference>
<dbReference type="CDD" id="cd03411">
    <property type="entry name" value="Ferrochelatase_N"/>
    <property type="match status" value="1"/>
</dbReference>
<dbReference type="FunFam" id="3.40.50.1400:FF:000002">
    <property type="entry name" value="Ferrochelatase"/>
    <property type="match status" value="1"/>
</dbReference>
<dbReference type="Gene3D" id="3.40.50.1400">
    <property type="match status" value="2"/>
</dbReference>
<dbReference type="HAMAP" id="MF_00323">
    <property type="entry name" value="Ferrochelatase"/>
    <property type="match status" value="1"/>
</dbReference>
<dbReference type="InterPro" id="IPR001015">
    <property type="entry name" value="Ferrochelatase"/>
</dbReference>
<dbReference type="InterPro" id="IPR019772">
    <property type="entry name" value="Ferrochelatase_AS"/>
</dbReference>
<dbReference type="InterPro" id="IPR033644">
    <property type="entry name" value="Ferrochelatase_C"/>
</dbReference>
<dbReference type="InterPro" id="IPR033659">
    <property type="entry name" value="Ferrochelatase_N"/>
</dbReference>
<dbReference type="NCBIfam" id="TIGR00109">
    <property type="entry name" value="hemH"/>
    <property type="match status" value="1"/>
</dbReference>
<dbReference type="PANTHER" id="PTHR11108">
    <property type="entry name" value="FERROCHELATASE"/>
    <property type="match status" value="1"/>
</dbReference>
<dbReference type="PANTHER" id="PTHR11108:SF1">
    <property type="entry name" value="FERROCHELATASE, MITOCHONDRIAL"/>
    <property type="match status" value="1"/>
</dbReference>
<dbReference type="Pfam" id="PF00762">
    <property type="entry name" value="Ferrochelatase"/>
    <property type="match status" value="1"/>
</dbReference>
<dbReference type="SUPFAM" id="SSF53800">
    <property type="entry name" value="Chelatase"/>
    <property type="match status" value="1"/>
</dbReference>
<dbReference type="PROSITE" id="PS00534">
    <property type="entry name" value="FERROCHELATASE"/>
    <property type="match status" value="1"/>
</dbReference>
<comment type="function">
    <text evidence="1">Catalyzes the ferrous insertion into protoporphyrin IX.</text>
</comment>
<comment type="catalytic activity">
    <reaction evidence="1">
        <text>heme b + 2 H(+) = protoporphyrin IX + Fe(2+)</text>
        <dbReference type="Rhea" id="RHEA:22584"/>
        <dbReference type="ChEBI" id="CHEBI:15378"/>
        <dbReference type="ChEBI" id="CHEBI:29033"/>
        <dbReference type="ChEBI" id="CHEBI:57306"/>
        <dbReference type="ChEBI" id="CHEBI:60344"/>
        <dbReference type="EC" id="4.98.1.1"/>
    </reaction>
</comment>
<comment type="pathway">
    <text evidence="1">Porphyrin-containing compound metabolism; protoheme biosynthesis; protoheme from protoporphyrin-IX: step 1/1.</text>
</comment>
<comment type="subcellular location">
    <subcellularLocation>
        <location evidence="1">Cytoplasm</location>
    </subcellularLocation>
</comment>
<comment type="similarity">
    <text evidence="1">Belongs to the ferrochelatase family.</text>
</comment>
<proteinExistence type="inferred from homology"/>
<keyword id="KW-0963">Cytoplasm</keyword>
<keyword id="KW-0350">Heme biosynthesis</keyword>
<keyword id="KW-0408">Iron</keyword>
<keyword id="KW-0456">Lyase</keyword>
<keyword id="KW-0479">Metal-binding</keyword>
<keyword id="KW-0627">Porphyrin biosynthesis</keyword>